<dbReference type="EMBL" id="AE005176">
    <property type="protein sequence ID" value="AAK05366.1"/>
    <property type="molecule type" value="Genomic_DNA"/>
</dbReference>
<dbReference type="PIR" id="D86783">
    <property type="entry name" value="D86783"/>
</dbReference>
<dbReference type="RefSeq" id="NP_267424.1">
    <property type="nucleotide sequence ID" value="NC_002662.1"/>
</dbReference>
<dbReference type="RefSeq" id="WP_003130214.1">
    <property type="nucleotide sequence ID" value="NC_002662.1"/>
</dbReference>
<dbReference type="SMR" id="Q9CG42"/>
<dbReference type="PaxDb" id="272623-L0405"/>
<dbReference type="EnsemblBacteria" id="AAK05366">
    <property type="protein sequence ID" value="AAK05366"/>
    <property type="gene ID" value="L0405"/>
</dbReference>
<dbReference type="GeneID" id="89633473"/>
<dbReference type="KEGG" id="lla:L0405"/>
<dbReference type="PATRIC" id="fig|272623.7.peg.1371"/>
<dbReference type="eggNOG" id="COG0222">
    <property type="taxonomic scope" value="Bacteria"/>
</dbReference>
<dbReference type="HOGENOM" id="CLU_086499_3_2_9"/>
<dbReference type="OrthoDB" id="9811748at2"/>
<dbReference type="Proteomes" id="UP000002196">
    <property type="component" value="Chromosome"/>
</dbReference>
<dbReference type="GO" id="GO:0022625">
    <property type="term" value="C:cytosolic large ribosomal subunit"/>
    <property type="evidence" value="ECO:0007669"/>
    <property type="project" value="TreeGrafter"/>
</dbReference>
<dbReference type="GO" id="GO:0003729">
    <property type="term" value="F:mRNA binding"/>
    <property type="evidence" value="ECO:0007669"/>
    <property type="project" value="TreeGrafter"/>
</dbReference>
<dbReference type="GO" id="GO:0003735">
    <property type="term" value="F:structural constituent of ribosome"/>
    <property type="evidence" value="ECO:0007669"/>
    <property type="project" value="InterPro"/>
</dbReference>
<dbReference type="GO" id="GO:0006412">
    <property type="term" value="P:translation"/>
    <property type="evidence" value="ECO:0007669"/>
    <property type="project" value="UniProtKB-UniRule"/>
</dbReference>
<dbReference type="CDD" id="cd00387">
    <property type="entry name" value="Ribosomal_L7_L12"/>
    <property type="match status" value="1"/>
</dbReference>
<dbReference type="FunFam" id="3.30.1390.10:FF:000001">
    <property type="entry name" value="50S ribosomal protein L7/L12"/>
    <property type="match status" value="1"/>
</dbReference>
<dbReference type="Gene3D" id="3.30.1390.10">
    <property type="match status" value="1"/>
</dbReference>
<dbReference type="Gene3D" id="1.20.5.710">
    <property type="entry name" value="Single helix bin"/>
    <property type="match status" value="1"/>
</dbReference>
<dbReference type="HAMAP" id="MF_00368">
    <property type="entry name" value="Ribosomal_bL12"/>
    <property type="match status" value="1"/>
</dbReference>
<dbReference type="InterPro" id="IPR000206">
    <property type="entry name" value="Ribosomal_bL12"/>
</dbReference>
<dbReference type="InterPro" id="IPR013823">
    <property type="entry name" value="Ribosomal_bL12_C"/>
</dbReference>
<dbReference type="InterPro" id="IPR014719">
    <property type="entry name" value="Ribosomal_bL12_C/ClpS-like"/>
</dbReference>
<dbReference type="InterPro" id="IPR008932">
    <property type="entry name" value="Ribosomal_bL12_oligo"/>
</dbReference>
<dbReference type="InterPro" id="IPR036235">
    <property type="entry name" value="Ribosomal_bL12_oligo_N_sf"/>
</dbReference>
<dbReference type="NCBIfam" id="TIGR00855">
    <property type="entry name" value="L12"/>
    <property type="match status" value="1"/>
</dbReference>
<dbReference type="PANTHER" id="PTHR45987">
    <property type="entry name" value="39S RIBOSOMAL PROTEIN L12"/>
    <property type="match status" value="1"/>
</dbReference>
<dbReference type="PANTHER" id="PTHR45987:SF4">
    <property type="entry name" value="LARGE RIBOSOMAL SUBUNIT PROTEIN BL12M"/>
    <property type="match status" value="1"/>
</dbReference>
<dbReference type="Pfam" id="PF00542">
    <property type="entry name" value="Ribosomal_L12"/>
    <property type="match status" value="1"/>
</dbReference>
<dbReference type="Pfam" id="PF16320">
    <property type="entry name" value="Ribosomal_L12_N"/>
    <property type="match status" value="1"/>
</dbReference>
<dbReference type="SUPFAM" id="SSF54736">
    <property type="entry name" value="ClpS-like"/>
    <property type="match status" value="1"/>
</dbReference>
<dbReference type="SUPFAM" id="SSF48300">
    <property type="entry name" value="Ribosomal protein L7/12, oligomerisation (N-terminal) domain"/>
    <property type="match status" value="1"/>
</dbReference>
<name>RL7_LACLA</name>
<sequence>MALNIENIVAELENATILELSELVKAIEEKFDVTAAAPVAAAAGAGDAAAAKDSFDVELTSAGDKKVAVIKEVRGITGLGLKEAKELVDGAPTMIKEGLSESEANEVKEKLEAAGASITLK</sequence>
<protein>
    <recommendedName>
        <fullName evidence="1">Large ribosomal subunit protein bL12</fullName>
    </recommendedName>
    <alternativeName>
        <fullName evidence="2">50S ribosomal protein L7/L12</fullName>
    </alternativeName>
</protein>
<comment type="function">
    <text evidence="1">Forms part of the ribosomal stalk which helps the ribosome interact with GTP-bound translation factors. Is thus essential for accurate translation.</text>
</comment>
<comment type="subunit">
    <text evidence="1">Homodimer. Part of the ribosomal stalk of the 50S ribosomal subunit. Forms a multimeric L10(L12)X complex, where L10 forms an elongated spine to which 2 to 4 L12 dimers bind in a sequential fashion. Binds GTP-bound translation factors.</text>
</comment>
<comment type="similarity">
    <text evidence="1">Belongs to the bacterial ribosomal protein bL12 family.</text>
</comment>
<organism>
    <name type="scientific">Lactococcus lactis subsp. lactis (strain IL1403)</name>
    <name type="common">Streptococcus lactis</name>
    <dbReference type="NCBI Taxonomy" id="272623"/>
    <lineage>
        <taxon>Bacteria</taxon>
        <taxon>Bacillati</taxon>
        <taxon>Bacillota</taxon>
        <taxon>Bacilli</taxon>
        <taxon>Lactobacillales</taxon>
        <taxon>Streptococcaceae</taxon>
        <taxon>Lactococcus</taxon>
    </lineage>
</organism>
<keyword id="KW-1185">Reference proteome</keyword>
<keyword id="KW-0687">Ribonucleoprotein</keyword>
<keyword id="KW-0689">Ribosomal protein</keyword>
<reference key="1">
    <citation type="journal article" date="2001" name="Genome Res.">
        <title>The complete genome sequence of the lactic acid bacterium Lactococcus lactis ssp. lactis IL1403.</title>
        <authorList>
            <person name="Bolotin A."/>
            <person name="Wincker P."/>
            <person name="Mauger S."/>
            <person name="Jaillon O."/>
            <person name="Malarme K."/>
            <person name="Weissenbach J."/>
            <person name="Ehrlich S.D."/>
            <person name="Sorokin A."/>
        </authorList>
    </citation>
    <scope>NUCLEOTIDE SEQUENCE [LARGE SCALE GENOMIC DNA]</scope>
    <source>
        <strain>IL1403</strain>
    </source>
</reference>
<evidence type="ECO:0000255" key="1">
    <source>
        <dbReference type="HAMAP-Rule" id="MF_00368"/>
    </source>
</evidence>
<evidence type="ECO:0000305" key="2"/>
<accession>Q9CG42</accession>
<proteinExistence type="inferred from homology"/>
<gene>
    <name evidence="1" type="primary">rplL</name>
    <name type="ordered locus">LL1268</name>
    <name type="ORF">L0405</name>
</gene>
<feature type="chain" id="PRO_0000157538" description="Large ribosomal subunit protein bL12">
    <location>
        <begin position="1"/>
        <end position="121"/>
    </location>
</feature>